<gene>
    <name evidence="6" type="primary">cap3</name>
    <name type="ORF">Q024_03600.1</name>
</gene>
<name>CAP3_PSEU5</name>
<feature type="chain" id="PRO_0000459519" description="CD-NTase/cGAS isopeptidase">
    <location>
        <begin position="1"/>
        <end position="158"/>
    </location>
</feature>
<feature type="active site" description="Proton donor/acceptor" evidence="1">
    <location>
        <position position="38"/>
    </location>
</feature>
<feature type="binding site" evidence="2">
    <location>
        <position position="100"/>
    </location>
    <ligand>
        <name>Zn(2+)</name>
        <dbReference type="ChEBI" id="CHEBI:29105"/>
        <note>catalytic</note>
    </ligand>
</feature>
<feature type="binding site" evidence="2">
    <location>
        <position position="102"/>
    </location>
    <ligand>
        <name>Zn(2+)</name>
        <dbReference type="ChEBI" id="CHEBI:29105"/>
        <note>catalytic</note>
    </ligand>
</feature>
<feature type="binding site" evidence="2">
    <location>
        <position position="113"/>
    </location>
    <ligand>
        <name>Zn(2+)</name>
        <dbReference type="ChEBI" id="CHEBI:29105"/>
        <note>catalytic</note>
    </ligand>
</feature>
<feature type="mutagenesis site" description="No change in defense against phage PaMx41. Increased conjugation of cGAS to cellular proteins." evidence="3 4">
    <original>E</original>
    <variation>A</variation>
    <location>
        <position position="38"/>
    </location>
</feature>
<reference key="1">
    <citation type="submission" date="2013-10" db="EMBL/GenBank/DDBJ databases">
        <title>The Genome Sequence of Pseudomonas aeruginosa BWHPSA011.</title>
        <authorList>
            <person name="Hung D."/>
            <person name="Penaranda C."/>
            <person name="Poulsen B."/>
            <person name="Young S.K."/>
            <person name="Zeng Q."/>
            <person name="Gargeya S."/>
            <person name="Fitzgerald M."/>
            <person name="Abouelleil A."/>
            <person name="Alvarado L."/>
            <person name="Chapman S.B."/>
            <person name="Gainer-Dewar J."/>
            <person name="Goldberg J."/>
            <person name="Griggs A."/>
            <person name="Gujja S."/>
            <person name="Hansen M."/>
            <person name="Howarth C."/>
            <person name="Imamovic A."/>
            <person name="Ireland A."/>
            <person name="Larimer J."/>
            <person name="McCowan C."/>
            <person name="Murphy C."/>
            <person name="Pearson M."/>
            <person name="Poon T.W."/>
            <person name="Priest M."/>
            <person name="Roberts A."/>
            <person name="Saif S."/>
            <person name="Shea T."/>
            <person name="Sykes S."/>
            <person name="Wortman J."/>
            <person name="Nusbaum C."/>
            <person name="Birren B."/>
        </authorList>
    </citation>
    <scope>NUCLEOTIDE SEQUENCE [LARGE SCALE GENOMIC DNA]</scope>
    <source>
        <strain>BWHPSA011 / Pa011</strain>
    </source>
</reference>
<reference key="2">
    <citation type="journal article" date="2019" name="Nature">
        <title>Bacterial cGAS-like enzymes synthesize diverse nucleotide signals.</title>
        <authorList>
            <person name="Whiteley A.T."/>
            <person name="Eaglesham J.B."/>
            <person name="de Oliveira Mann C.C."/>
            <person name="Morehouse B.R."/>
            <person name="Lowey B."/>
            <person name="Nieminen E.A."/>
            <person name="Danilchanka O."/>
            <person name="King D.S."/>
            <person name="Lee A.S.Y."/>
            <person name="Mekalanos J.J."/>
            <person name="Kranzusch P.J."/>
        </authorList>
    </citation>
    <scope>NOMENCLATURE</scope>
    <scope>SIMILARITY</scope>
</reference>
<reference key="3">
    <citation type="journal article" date="2023" name="Cell">
        <title>Bacteriophages inhibit and evade cGAS-like immune function in bacteria.</title>
        <authorList>
            <person name="Huiting E."/>
            <person name="Cao X."/>
            <person name="Ren J."/>
            <person name="Athukoralage J.S."/>
            <person name="Luo Z."/>
            <person name="Silas S."/>
            <person name="An N."/>
            <person name="Carion H."/>
            <person name="Zhou Y."/>
            <person name="Fraser J.S."/>
            <person name="Feng Y."/>
            <person name="Bondy-Denomy J."/>
        </authorList>
    </citation>
    <scope>ANTIVIRAL DEFENSE</scope>
    <scope>DISRUPTION PHENOTYPE</scope>
    <scope>MUTAGENESIS OF GLU-38</scope>
    <source>
        <strain>BWHPSA011 / Pa011</strain>
    </source>
</reference>
<reference key="4">
    <citation type="journal article" date="2023" name="Nature">
        <title>Ubiquitin-like conjugation by bacterial cGAS enhances anti-phage defence.</title>
        <authorList>
            <person name="Jenson J.M."/>
            <person name="Li T."/>
            <person name="Du F."/>
            <person name="Ea C.K."/>
            <person name="Chen Z.J."/>
        </authorList>
    </citation>
    <scope>FUNCTION</scope>
    <scope>MUTAGENESIS OF GLU-38</scope>
    <source>
        <strain>BWHPSA011 / Pa011</strain>
    </source>
</reference>
<dbReference type="EC" id="3.4.-.-" evidence="10"/>
<dbReference type="EMBL" id="AXQR01000012">
    <property type="status" value="NOT_ANNOTATED_CDS"/>
    <property type="molecule type" value="Genomic_DNA"/>
</dbReference>
<dbReference type="RefSeq" id="WP_071557665.1">
    <property type="nucleotide sequence ID" value="NZ_KI519087.1"/>
</dbReference>
<dbReference type="SMR" id="P0DX88"/>
<dbReference type="GO" id="GO:0046872">
    <property type="term" value="F:metal ion binding"/>
    <property type="evidence" value="ECO:0007669"/>
    <property type="project" value="UniProtKB-KW"/>
</dbReference>
<dbReference type="GO" id="GO:0008237">
    <property type="term" value="F:metallopeptidase activity"/>
    <property type="evidence" value="ECO:0007669"/>
    <property type="project" value="UniProtKB-KW"/>
</dbReference>
<dbReference type="GO" id="GO:0051607">
    <property type="term" value="P:defense response to virus"/>
    <property type="evidence" value="ECO:0007669"/>
    <property type="project" value="UniProtKB-KW"/>
</dbReference>
<dbReference type="GO" id="GO:0006508">
    <property type="term" value="P:proteolysis"/>
    <property type="evidence" value="ECO:0007669"/>
    <property type="project" value="UniProtKB-KW"/>
</dbReference>
<dbReference type="Gene3D" id="3.40.140.10">
    <property type="entry name" value="Cytidine Deaminase, domain 2"/>
    <property type="match status" value="1"/>
</dbReference>
<dbReference type="InterPro" id="IPR028090">
    <property type="entry name" value="JAB_dom_prok"/>
</dbReference>
<dbReference type="Pfam" id="PF14464">
    <property type="entry name" value="Prok-JAB"/>
    <property type="match status" value="1"/>
</dbReference>
<dbReference type="SUPFAM" id="SSF102712">
    <property type="entry name" value="JAB1/MPN domain"/>
    <property type="match status" value="1"/>
</dbReference>
<comment type="function">
    <text evidence="3 5 10">Metalloprotease priming reversal component of a CBASS antivirus system (Probable) (PubMed:36848932). CBASS (cyclic oligonucleotide-based antiphage signaling system) provides immunity against bacteriophages. The CD-NTase protein synthesizes cyclic nucleotides in response to infection; these serve as specific second messenger signals (PubMed:36750095). The signals activate a diverse range of effectors, leading to bacterial cell death and thus abortive phage infection (PubMed:36750095). A type II-A(GA) CBASS system (PubMed:30787435, PubMed:36750095).</text>
</comment>
<comment type="function">
    <text evidence="10">Reverses the primed state of CdnA, the CD-NTase (PubMed:36848932).</text>
</comment>
<comment type="function">
    <text evidence="3">The capV-cdnA-cap2-cap3 operon provides about 10(4)-fold protection in strain BWHPSA011 against infection by phage PaMx41 (PubMed:36750095). In P.aeruginosa strain PAO1 it confers protection against phages PaMx41 and JBD18 but not JBD67 (JBD18 and JBD67 do not replicate in BWHPSA011 / Pa011) (PubMed:36750095). When acb2 in JBD67 is deleted this CBASS operon then protects against JDB67 also (PubMed:36750095). This CBASS system limits prophage induction of lysogenized JBD67 as well as viral lytic replication (PubMed:36750095).</text>
</comment>
<comment type="induction">
    <text evidence="9">Part of a CBASS operon consisting of capV-cdnA-cap2-cap3.</text>
</comment>
<comment type="disruption phenotype">
    <text evidence="3">Deletion of the capV-cdnA-cap2-cap3 operon (plus neighboring gene Q024_03603) results in about 10(4) higher titer of phage PaMx41 in this strain.</text>
</comment>
<comment type="similarity">
    <text evidence="8">Belongs to the peptidase M67B family. Cap3 isopeptidase subfamily.</text>
</comment>
<proteinExistence type="evidence at protein level"/>
<sequence length="158" mass="17806">MQFMSSWAADDNRTLLHFSKSTLETFRQHVQASDSDCEAGGLLLGSVHGTHMLIEHATVPTAWDKRFRYLFERMPFGHEAIALARWTASQGTIRHLGEWHTHPEDNPNPSGLDRSEWNRLSAKRRDKRPTLAVIVGRNALYIELVPGSGQGSVFSPVE</sequence>
<evidence type="ECO:0000250" key="1">
    <source>
        <dbReference type="UniProtKB" id="D4GTS4"/>
    </source>
</evidence>
<evidence type="ECO:0000250" key="2">
    <source>
        <dbReference type="UniProtKB" id="Q8U1Y4"/>
    </source>
</evidence>
<evidence type="ECO:0000269" key="3">
    <source>
    </source>
</evidence>
<evidence type="ECO:0000269" key="4">
    <source>
    </source>
</evidence>
<evidence type="ECO:0000303" key="5">
    <source>
    </source>
</evidence>
<evidence type="ECO:0000303" key="6">
    <source>
    </source>
</evidence>
<evidence type="ECO:0000303" key="7">
    <source>
    </source>
</evidence>
<evidence type="ECO:0000305" key="8"/>
<evidence type="ECO:0000305" key="9">
    <source>
    </source>
</evidence>
<evidence type="ECO:0000305" key="10">
    <source>
    </source>
</evidence>
<protein>
    <recommendedName>
        <fullName evidence="7">CD-NTase/cGAS isopeptidase</fullName>
        <ecNumber evidence="10">3.4.-.-</ecNumber>
    </recommendedName>
    <alternativeName>
        <fullName evidence="5">CD-NTase-associated protein 3</fullName>
        <shortName evidence="5">Cap3</shortName>
    </alternativeName>
    <alternativeName>
        <fullName evidence="7">Cap3 protease</fullName>
    </alternativeName>
</protein>
<keyword id="KW-0051">Antiviral defense</keyword>
<keyword id="KW-0378">Hydrolase</keyword>
<keyword id="KW-0479">Metal-binding</keyword>
<keyword id="KW-0482">Metalloprotease</keyword>
<keyword id="KW-0645">Protease</keyword>
<keyword id="KW-0862">Zinc</keyword>
<organism>
    <name type="scientific">Pseudomonas aeruginosa (strain BWHPSA011 / Pa011)</name>
    <dbReference type="NCBI Taxonomy" id="1402511"/>
    <lineage>
        <taxon>Bacteria</taxon>
        <taxon>Pseudomonadati</taxon>
        <taxon>Pseudomonadota</taxon>
        <taxon>Gammaproteobacteria</taxon>
        <taxon>Pseudomonadales</taxon>
        <taxon>Pseudomonadaceae</taxon>
        <taxon>Pseudomonas</taxon>
    </lineage>
</organism>
<accession>P0DX88</accession>